<dbReference type="EMBL" id="CP000746">
    <property type="protein sequence ID" value="ABR75265.1"/>
    <property type="molecule type" value="Genomic_DNA"/>
</dbReference>
<dbReference type="RefSeq" id="WP_012073642.1">
    <property type="nucleotide sequence ID" value="NC_009655.1"/>
</dbReference>
<dbReference type="SMR" id="A6VQL8"/>
<dbReference type="STRING" id="339671.Asuc_1917"/>
<dbReference type="KEGG" id="asu:Asuc_1917"/>
<dbReference type="eggNOG" id="COG0361">
    <property type="taxonomic scope" value="Bacteria"/>
</dbReference>
<dbReference type="HOGENOM" id="CLU_151267_1_0_6"/>
<dbReference type="OrthoDB" id="9803250at2"/>
<dbReference type="Proteomes" id="UP000001114">
    <property type="component" value="Chromosome"/>
</dbReference>
<dbReference type="GO" id="GO:0005829">
    <property type="term" value="C:cytosol"/>
    <property type="evidence" value="ECO:0007669"/>
    <property type="project" value="TreeGrafter"/>
</dbReference>
<dbReference type="GO" id="GO:0043022">
    <property type="term" value="F:ribosome binding"/>
    <property type="evidence" value="ECO:0007669"/>
    <property type="project" value="UniProtKB-UniRule"/>
</dbReference>
<dbReference type="GO" id="GO:0019843">
    <property type="term" value="F:rRNA binding"/>
    <property type="evidence" value="ECO:0007669"/>
    <property type="project" value="UniProtKB-UniRule"/>
</dbReference>
<dbReference type="GO" id="GO:0003743">
    <property type="term" value="F:translation initiation factor activity"/>
    <property type="evidence" value="ECO:0007669"/>
    <property type="project" value="UniProtKB-UniRule"/>
</dbReference>
<dbReference type="CDD" id="cd04451">
    <property type="entry name" value="S1_IF1"/>
    <property type="match status" value="1"/>
</dbReference>
<dbReference type="FunFam" id="2.40.50.140:FF:000002">
    <property type="entry name" value="Translation initiation factor IF-1"/>
    <property type="match status" value="1"/>
</dbReference>
<dbReference type="Gene3D" id="2.40.50.140">
    <property type="entry name" value="Nucleic acid-binding proteins"/>
    <property type="match status" value="1"/>
</dbReference>
<dbReference type="HAMAP" id="MF_00075">
    <property type="entry name" value="IF_1"/>
    <property type="match status" value="1"/>
</dbReference>
<dbReference type="InterPro" id="IPR012340">
    <property type="entry name" value="NA-bd_OB-fold"/>
</dbReference>
<dbReference type="InterPro" id="IPR006196">
    <property type="entry name" value="RNA-binding_domain_S1_IF1"/>
</dbReference>
<dbReference type="InterPro" id="IPR003029">
    <property type="entry name" value="S1_domain"/>
</dbReference>
<dbReference type="InterPro" id="IPR004368">
    <property type="entry name" value="TIF_IF1"/>
</dbReference>
<dbReference type="NCBIfam" id="TIGR00008">
    <property type="entry name" value="infA"/>
    <property type="match status" value="1"/>
</dbReference>
<dbReference type="PANTHER" id="PTHR33370">
    <property type="entry name" value="TRANSLATION INITIATION FACTOR IF-1, CHLOROPLASTIC"/>
    <property type="match status" value="1"/>
</dbReference>
<dbReference type="PANTHER" id="PTHR33370:SF1">
    <property type="entry name" value="TRANSLATION INITIATION FACTOR IF-1, CHLOROPLASTIC"/>
    <property type="match status" value="1"/>
</dbReference>
<dbReference type="Pfam" id="PF01176">
    <property type="entry name" value="eIF-1a"/>
    <property type="match status" value="1"/>
</dbReference>
<dbReference type="SMART" id="SM00316">
    <property type="entry name" value="S1"/>
    <property type="match status" value="1"/>
</dbReference>
<dbReference type="SUPFAM" id="SSF50249">
    <property type="entry name" value="Nucleic acid-binding proteins"/>
    <property type="match status" value="1"/>
</dbReference>
<dbReference type="PROSITE" id="PS50832">
    <property type="entry name" value="S1_IF1_TYPE"/>
    <property type="match status" value="1"/>
</dbReference>
<accession>A6VQL8</accession>
<feature type="chain" id="PRO_0000338753" description="Translation initiation factor IF-1">
    <location>
        <begin position="1"/>
        <end position="72"/>
    </location>
</feature>
<feature type="domain" description="S1-like" evidence="1">
    <location>
        <begin position="1"/>
        <end position="72"/>
    </location>
</feature>
<organism>
    <name type="scientific">Actinobacillus succinogenes (strain ATCC 55618 / DSM 22257 / CCUG 43843 / 130Z)</name>
    <dbReference type="NCBI Taxonomy" id="339671"/>
    <lineage>
        <taxon>Bacteria</taxon>
        <taxon>Pseudomonadati</taxon>
        <taxon>Pseudomonadota</taxon>
        <taxon>Gammaproteobacteria</taxon>
        <taxon>Pasteurellales</taxon>
        <taxon>Pasteurellaceae</taxon>
        <taxon>Actinobacillus</taxon>
    </lineage>
</organism>
<name>IF1_ACTSZ</name>
<comment type="function">
    <text evidence="1">One of the essential components for the initiation of protein synthesis. Stabilizes the binding of IF-2 and IF-3 on the 30S subunit to which N-formylmethionyl-tRNA(fMet) subsequently binds. Helps modulate mRNA selection, yielding the 30S pre-initiation complex (PIC). Upon addition of the 50S ribosomal subunit IF-1, IF-2 and IF-3 are released leaving the mature 70S translation initiation complex.</text>
</comment>
<comment type="subunit">
    <text evidence="1">Component of the 30S ribosomal translation pre-initiation complex which assembles on the 30S ribosome in the order IF-2 and IF-3, IF-1 and N-formylmethionyl-tRNA(fMet); mRNA recruitment can occur at any time during PIC assembly.</text>
</comment>
<comment type="subcellular location">
    <subcellularLocation>
        <location evidence="1">Cytoplasm</location>
    </subcellularLocation>
</comment>
<comment type="similarity">
    <text evidence="1">Belongs to the IF-1 family.</text>
</comment>
<keyword id="KW-0963">Cytoplasm</keyword>
<keyword id="KW-0396">Initiation factor</keyword>
<keyword id="KW-0648">Protein biosynthesis</keyword>
<keyword id="KW-1185">Reference proteome</keyword>
<keyword id="KW-0694">RNA-binding</keyword>
<keyword id="KW-0699">rRNA-binding</keyword>
<protein>
    <recommendedName>
        <fullName evidence="1">Translation initiation factor IF-1</fullName>
    </recommendedName>
</protein>
<proteinExistence type="inferred from homology"/>
<sequence>MAKEDSIEMQGTILETLPNTMFRVELENGHVLTAHISGKMRKNYIRILTGDKVTVEMTPYDLTKGRIIFRAR</sequence>
<gene>
    <name evidence="1" type="primary">infA</name>
    <name type="ordered locus">Asuc_1917</name>
</gene>
<evidence type="ECO:0000255" key="1">
    <source>
        <dbReference type="HAMAP-Rule" id="MF_00075"/>
    </source>
</evidence>
<reference key="1">
    <citation type="journal article" date="2010" name="BMC Genomics">
        <title>A genomic perspective on the potential of Actinobacillus succinogenes for industrial succinate production.</title>
        <authorList>
            <person name="McKinlay J.B."/>
            <person name="Laivenieks M."/>
            <person name="Schindler B.D."/>
            <person name="McKinlay A.A."/>
            <person name="Siddaramappa S."/>
            <person name="Challacombe J.F."/>
            <person name="Lowry S.R."/>
            <person name="Clum A."/>
            <person name="Lapidus A.L."/>
            <person name="Burkhart K.B."/>
            <person name="Harkins V."/>
            <person name="Vieille C."/>
        </authorList>
    </citation>
    <scope>NUCLEOTIDE SEQUENCE [LARGE SCALE GENOMIC DNA]</scope>
    <source>
        <strain>ATCC 55618 / DSM 22257 / CCUG 43843 / 130Z</strain>
    </source>
</reference>